<evidence type="ECO:0000255" key="1">
    <source>
        <dbReference type="HAMAP-Rule" id="MF_00059"/>
    </source>
</evidence>
<comment type="function">
    <text evidence="1">DNA-dependent RNA polymerase catalyzes the transcription of DNA into RNA using the four ribonucleoside triphosphates as substrates.</text>
</comment>
<comment type="catalytic activity">
    <reaction evidence="1">
        <text>RNA(n) + a ribonucleoside 5'-triphosphate = RNA(n+1) + diphosphate</text>
        <dbReference type="Rhea" id="RHEA:21248"/>
        <dbReference type="Rhea" id="RHEA-COMP:14527"/>
        <dbReference type="Rhea" id="RHEA-COMP:17342"/>
        <dbReference type="ChEBI" id="CHEBI:33019"/>
        <dbReference type="ChEBI" id="CHEBI:61557"/>
        <dbReference type="ChEBI" id="CHEBI:140395"/>
        <dbReference type="EC" id="2.7.7.6"/>
    </reaction>
</comment>
<comment type="subunit">
    <text evidence="1">Homodimer. The RNAP catalytic core consists of 2 alpha, 1 beta, 1 beta' and 1 omega subunit. When a sigma factor is associated with the core the holoenzyme is formed, which can initiate transcription.</text>
</comment>
<comment type="domain">
    <text evidence="1">The N-terminal domain is essential for RNAP assembly and basal transcription, whereas the C-terminal domain is involved in interaction with transcriptional regulators and with upstream promoter elements.</text>
</comment>
<comment type="similarity">
    <text evidence="1">Belongs to the RNA polymerase alpha chain family.</text>
</comment>
<proteinExistence type="inferred from homology"/>
<organism>
    <name type="scientific">Ureaplasma parvum serovar 3 (strain ATCC 700970)</name>
    <dbReference type="NCBI Taxonomy" id="273119"/>
    <lineage>
        <taxon>Bacteria</taxon>
        <taxon>Bacillati</taxon>
        <taxon>Mycoplasmatota</taxon>
        <taxon>Mycoplasmoidales</taxon>
        <taxon>Mycoplasmoidaceae</taxon>
        <taxon>Ureaplasma</taxon>
    </lineage>
</organism>
<reference key="1">
    <citation type="journal article" date="2000" name="Nature">
        <title>The complete sequence of the mucosal pathogen Ureaplasma urealyticum.</title>
        <authorList>
            <person name="Glass J.I."/>
            <person name="Lefkowitz E.J."/>
            <person name="Glass J.S."/>
            <person name="Heiner C.R."/>
            <person name="Chen E.Y."/>
            <person name="Cassell G.H."/>
        </authorList>
    </citation>
    <scope>NUCLEOTIDE SEQUENCE [LARGE SCALE GENOMIC DNA]</scope>
    <source>
        <strain>ATCC 700970</strain>
    </source>
</reference>
<dbReference type="EC" id="2.7.7.6" evidence="1"/>
<dbReference type="EMBL" id="AF222894">
    <property type="protein sequence ID" value="AAF30666.1"/>
    <property type="molecule type" value="Genomic_DNA"/>
</dbReference>
<dbReference type="RefSeq" id="WP_004027516.1">
    <property type="nucleotide sequence ID" value="NC_002162.1"/>
</dbReference>
<dbReference type="SMR" id="Q9PQN4"/>
<dbReference type="STRING" id="273119.UU257"/>
<dbReference type="EnsemblBacteria" id="AAF30666">
    <property type="protein sequence ID" value="AAF30666"/>
    <property type="gene ID" value="UU257"/>
</dbReference>
<dbReference type="GeneID" id="29672475"/>
<dbReference type="KEGG" id="uur:UU257"/>
<dbReference type="eggNOG" id="COG0202">
    <property type="taxonomic scope" value="Bacteria"/>
</dbReference>
<dbReference type="HOGENOM" id="CLU_053084_0_1_14"/>
<dbReference type="OrthoDB" id="9805706at2"/>
<dbReference type="Proteomes" id="UP000000423">
    <property type="component" value="Chromosome"/>
</dbReference>
<dbReference type="GO" id="GO:0005737">
    <property type="term" value="C:cytoplasm"/>
    <property type="evidence" value="ECO:0007669"/>
    <property type="project" value="UniProtKB-ARBA"/>
</dbReference>
<dbReference type="GO" id="GO:0000428">
    <property type="term" value="C:DNA-directed RNA polymerase complex"/>
    <property type="evidence" value="ECO:0007669"/>
    <property type="project" value="UniProtKB-KW"/>
</dbReference>
<dbReference type="GO" id="GO:0003677">
    <property type="term" value="F:DNA binding"/>
    <property type="evidence" value="ECO:0007669"/>
    <property type="project" value="UniProtKB-UniRule"/>
</dbReference>
<dbReference type="GO" id="GO:0003899">
    <property type="term" value="F:DNA-directed RNA polymerase activity"/>
    <property type="evidence" value="ECO:0007669"/>
    <property type="project" value="UniProtKB-UniRule"/>
</dbReference>
<dbReference type="GO" id="GO:0046983">
    <property type="term" value="F:protein dimerization activity"/>
    <property type="evidence" value="ECO:0007669"/>
    <property type="project" value="InterPro"/>
</dbReference>
<dbReference type="GO" id="GO:0006351">
    <property type="term" value="P:DNA-templated transcription"/>
    <property type="evidence" value="ECO:0007669"/>
    <property type="project" value="UniProtKB-UniRule"/>
</dbReference>
<dbReference type="CDD" id="cd06928">
    <property type="entry name" value="RNAP_alpha_NTD"/>
    <property type="match status" value="1"/>
</dbReference>
<dbReference type="Gene3D" id="1.10.150.20">
    <property type="entry name" value="5' to 3' exonuclease, C-terminal subdomain"/>
    <property type="match status" value="1"/>
</dbReference>
<dbReference type="Gene3D" id="2.170.120.12">
    <property type="entry name" value="DNA-directed RNA polymerase, insert domain"/>
    <property type="match status" value="1"/>
</dbReference>
<dbReference type="Gene3D" id="3.30.1360.10">
    <property type="entry name" value="RNA polymerase, RBP11-like subunit"/>
    <property type="match status" value="1"/>
</dbReference>
<dbReference type="HAMAP" id="MF_00059">
    <property type="entry name" value="RNApol_bact_RpoA"/>
    <property type="match status" value="1"/>
</dbReference>
<dbReference type="InterPro" id="IPR011262">
    <property type="entry name" value="DNA-dir_RNA_pol_insert"/>
</dbReference>
<dbReference type="InterPro" id="IPR011263">
    <property type="entry name" value="DNA-dir_RNA_pol_RpoA/D/Rpb3"/>
</dbReference>
<dbReference type="InterPro" id="IPR011773">
    <property type="entry name" value="DNA-dir_RpoA"/>
</dbReference>
<dbReference type="InterPro" id="IPR036603">
    <property type="entry name" value="RBP11-like"/>
</dbReference>
<dbReference type="InterPro" id="IPR011260">
    <property type="entry name" value="RNAP_asu_C"/>
</dbReference>
<dbReference type="InterPro" id="IPR036643">
    <property type="entry name" value="RNApol_insert_sf"/>
</dbReference>
<dbReference type="NCBIfam" id="NF003519">
    <property type="entry name" value="PRK05182.2-5"/>
    <property type="match status" value="1"/>
</dbReference>
<dbReference type="NCBIfam" id="TIGR02027">
    <property type="entry name" value="rpoA"/>
    <property type="match status" value="1"/>
</dbReference>
<dbReference type="Pfam" id="PF01000">
    <property type="entry name" value="RNA_pol_A_bac"/>
    <property type="match status" value="1"/>
</dbReference>
<dbReference type="Pfam" id="PF03118">
    <property type="entry name" value="RNA_pol_A_CTD"/>
    <property type="match status" value="1"/>
</dbReference>
<dbReference type="Pfam" id="PF01193">
    <property type="entry name" value="RNA_pol_L"/>
    <property type="match status" value="1"/>
</dbReference>
<dbReference type="SMART" id="SM00662">
    <property type="entry name" value="RPOLD"/>
    <property type="match status" value="1"/>
</dbReference>
<dbReference type="SUPFAM" id="SSF47789">
    <property type="entry name" value="C-terminal domain of RNA polymerase alpha subunit"/>
    <property type="match status" value="1"/>
</dbReference>
<dbReference type="SUPFAM" id="SSF56553">
    <property type="entry name" value="Insert subdomain of RNA polymerase alpha subunit"/>
    <property type="match status" value="1"/>
</dbReference>
<dbReference type="SUPFAM" id="SSF55257">
    <property type="entry name" value="RBP11-like subunits of RNA polymerase"/>
    <property type="match status" value="1"/>
</dbReference>
<feature type="chain" id="PRO_0000175415" description="DNA-directed RNA polymerase subunit alpha">
    <location>
        <begin position="1"/>
        <end position="327"/>
    </location>
</feature>
<feature type="region of interest" description="Alpha N-terminal domain (alpha-NTD)" evidence="1">
    <location>
        <begin position="1"/>
        <end position="242"/>
    </location>
</feature>
<feature type="region of interest" description="Alpha C-terminal domain (alpha-CTD)" evidence="1">
    <location>
        <begin position="259"/>
        <end position="327"/>
    </location>
</feature>
<keyword id="KW-0240">DNA-directed RNA polymerase</keyword>
<keyword id="KW-0548">Nucleotidyltransferase</keyword>
<keyword id="KW-1185">Reference proteome</keyword>
<keyword id="KW-0804">Transcription</keyword>
<keyword id="KW-0808">Transferase</keyword>
<protein>
    <recommendedName>
        <fullName evidence="1">DNA-directed RNA polymerase subunit alpha</fullName>
        <shortName evidence="1">RNAP subunit alpha</shortName>
        <ecNumber evidence="1">2.7.7.6</ecNumber>
    </recommendedName>
    <alternativeName>
        <fullName evidence="1">RNA polymerase subunit alpha</fullName>
    </alternativeName>
    <alternativeName>
        <fullName evidence="1">Transcriptase subunit alpha</fullName>
    </alternativeName>
</protein>
<name>RPOA_UREPA</name>
<sequence>MRKFLKYQLDVPSINSEDKNRTVVKIAPLEIGFGDTLGNALRRICLSSIPGASMFAVKFGGYSHEFQPYEGVKEDITHIILNLKNLAIKIDELIYSEDYFNNLLIDKWPKMKINFKGPGVITAKDIVCPVGFEIVNQDLYIAEVTKPIDVEIEIFAKTGRGRVDFNTNKDFVSTLHIIATDSNYSPVLHYAYNVEMIKDSKSSMSEILTIDIATNGTISGSEAIAIAAKIMQAHLEPIVNIDKTINEMIIMREREEEEKRQNASISIDDLDLTVRAYNALKQSGINTTAELIELTKSQLEKIKNLGRKSVTEIIQKLTERSLELKKD</sequence>
<accession>Q9PQN4</accession>
<gene>
    <name evidence="1" type="primary">rpoA</name>
    <name type="ordered locus">UU257</name>
</gene>